<accession>Q00825</accession>
<feature type="chain" id="PRO_0000002592" description="ATP synthase subunit a, chloroplastic">
    <location>
        <begin position="1"/>
        <end position="242"/>
    </location>
</feature>
<feature type="transmembrane region" description="Helical" evidence="1">
    <location>
        <begin position="34"/>
        <end position="54"/>
    </location>
</feature>
<feature type="transmembrane region" description="Helical" evidence="1">
    <location>
        <begin position="93"/>
        <end position="113"/>
    </location>
</feature>
<feature type="transmembrane region" description="Helical" evidence="1">
    <location>
        <begin position="132"/>
        <end position="152"/>
    </location>
</feature>
<feature type="transmembrane region" description="Helical" evidence="1">
    <location>
        <begin position="188"/>
        <end position="210"/>
    </location>
</feature>
<feature type="transmembrane region" description="Helical" evidence="1">
    <location>
        <begin position="222"/>
        <end position="242"/>
    </location>
</feature>
<protein>
    <recommendedName>
        <fullName evidence="1">ATP synthase subunit a, chloroplastic</fullName>
    </recommendedName>
    <alternativeName>
        <fullName evidence="1">ATP synthase F0 sector subunit a</fullName>
    </alternativeName>
    <alternativeName>
        <fullName evidence="1">F-ATPase subunit IV</fullName>
    </alternativeName>
</protein>
<organism>
    <name type="scientific">Trieres chinensis</name>
    <name type="common">Marine centric diatom</name>
    <name type="synonym">Odontella sinensis</name>
    <dbReference type="NCBI Taxonomy" id="1514140"/>
    <lineage>
        <taxon>Eukaryota</taxon>
        <taxon>Sar</taxon>
        <taxon>Stramenopiles</taxon>
        <taxon>Ochrophyta</taxon>
        <taxon>Bacillariophyta</taxon>
        <taxon>Mediophyceae</taxon>
        <taxon>Biddulphiophycidae</taxon>
        <taxon>Eupodiscales</taxon>
        <taxon>Parodontellaceae</taxon>
        <taxon>Trieres</taxon>
    </lineage>
</organism>
<sequence length="242" mass="26898">MYPDNFYSSTFTLLAEAEVGKHFYWDIAGFLVHGQVLVVVWFVLALLLLFAVLGTRDIDRIPNSWQNFAESAVDFVTDIARDQLGESFYREWVPFIGTLFLFIFGCNWAGAIIPWKLIELPEGELAAPTNDINTTVALALLTSLAYFYAGLSKKGFGYFKRYIQPIPLLLPINILEDFTKPLSLSFRLFGNVLADELTITVLTSLVPLVIPLPIMALGIFAGSVQALIFSTLAAAYIAEALE</sequence>
<evidence type="ECO:0000255" key="1">
    <source>
        <dbReference type="HAMAP-Rule" id="MF_01393"/>
    </source>
</evidence>
<name>ATPI_TRICV</name>
<keyword id="KW-0066">ATP synthesis</keyword>
<keyword id="KW-0138">CF(0)</keyword>
<keyword id="KW-0150">Chloroplast</keyword>
<keyword id="KW-0375">Hydrogen ion transport</keyword>
<keyword id="KW-0406">Ion transport</keyword>
<keyword id="KW-0472">Membrane</keyword>
<keyword id="KW-0934">Plastid</keyword>
<keyword id="KW-0793">Thylakoid</keyword>
<keyword id="KW-0812">Transmembrane</keyword>
<keyword id="KW-1133">Transmembrane helix</keyword>
<keyword id="KW-0813">Transport</keyword>
<reference key="1">
    <citation type="journal article" date="1992" name="J. Mol. Biol.">
        <title>Chloroplast ATPase genes in the diatom Odontella sinensis reflect cyanobacterial characters in structure and arrangement.</title>
        <authorList>
            <person name="Pancic P.G."/>
            <person name="Strotmann H."/>
            <person name="Kowallik K.V."/>
        </authorList>
    </citation>
    <scope>NUCLEOTIDE SEQUENCE [GENOMIC DNA]</scope>
</reference>
<reference key="2">
    <citation type="journal article" date="1995" name="Plant Mol. Biol. Rep.">
        <title>The chloroplast genome of a chlorophyll a+c-containing alga, Odontella sinensis.</title>
        <authorList>
            <person name="Kowallik K.V."/>
            <person name="Stoebe B."/>
            <person name="Schaffran I."/>
            <person name="Kroth-Pancic P."/>
            <person name="Freier U."/>
        </authorList>
    </citation>
    <scope>NUCLEOTIDE SEQUENCE [LARGE SCALE GENOMIC DNA]</scope>
</reference>
<proteinExistence type="inferred from homology"/>
<dbReference type="EMBL" id="X60752">
    <property type="protein sequence ID" value="CAA43152.1"/>
    <property type="molecule type" value="Genomic_DNA"/>
</dbReference>
<dbReference type="EMBL" id="Z67753">
    <property type="protein sequence ID" value="CAA91689.1"/>
    <property type="molecule type" value="Genomic_DNA"/>
</dbReference>
<dbReference type="PIR" id="S78316">
    <property type="entry name" value="S78316"/>
</dbReference>
<dbReference type="RefSeq" id="NP_043657.1">
    <property type="nucleotide sequence ID" value="NC_001713.1"/>
</dbReference>
<dbReference type="SMR" id="Q00825"/>
<dbReference type="GeneID" id="801734"/>
<dbReference type="GO" id="GO:0009535">
    <property type="term" value="C:chloroplast thylakoid membrane"/>
    <property type="evidence" value="ECO:0007669"/>
    <property type="project" value="UniProtKB-SubCell"/>
</dbReference>
<dbReference type="GO" id="GO:0005886">
    <property type="term" value="C:plasma membrane"/>
    <property type="evidence" value="ECO:0007669"/>
    <property type="project" value="UniProtKB-UniRule"/>
</dbReference>
<dbReference type="GO" id="GO:0045259">
    <property type="term" value="C:proton-transporting ATP synthase complex"/>
    <property type="evidence" value="ECO:0007669"/>
    <property type="project" value="UniProtKB-KW"/>
</dbReference>
<dbReference type="GO" id="GO:0046933">
    <property type="term" value="F:proton-transporting ATP synthase activity, rotational mechanism"/>
    <property type="evidence" value="ECO:0007669"/>
    <property type="project" value="UniProtKB-UniRule"/>
</dbReference>
<dbReference type="CDD" id="cd00310">
    <property type="entry name" value="ATP-synt_Fo_a_6"/>
    <property type="match status" value="1"/>
</dbReference>
<dbReference type="FunFam" id="1.20.120.220:FF:000001">
    <property type="entry name" value="ATP synthase subunit a, chloroplastic"/>
    <property type="match status" value="1"/>
</dbReference>
<dbReference type="Gene3D" id="1.20.120.220">
    <property type="entry name" value="ATP synthase, F0 complex, subunit A"/>
    <property type="match status" value="1"/>
</dbReference>
<dbReference type="HAMAP" id="MF_01393">
    <property type="entry name" value="ATP_synth_a_bact"/>
    <property type="match status" value="1"/>
</dbReference>
<dbReference type="InterPro" id="IPR045082">
    <property type="entry name" value="ATP_syn_F0_a_bact/chloroplast"/>
</dbReference>
<dbReference type="InterPro" id="IPR000568">
    <property type="entry name" value="ATP_synth_F0_asu"/>
</dbReference>
<dbReference type="InterPro" id="IPR023011">
    <property type="entry name" value="ATP_synth_F0_asu_AS"/>
</dbReference>
<dbReference type="InterPro" id="IPR035908">
    <property type="entry name" value="F0_ATP_A_sf"/>
</dbReference>
<dbReference type="NCBIfam" id="TIGR01131">
    <property type="entry name" value="ATP_synt_6_or_A"/>
    <property type="match status" value="1"/>
</dbReference>
<dbReference type="PANTHER" id="PTHR42823">
    <property type="entry name" value="ATP SYNTHASE SUBUNIT A, CHLOROPLASTIC"/>
    <property type="match status" value="1"/>
</dbReference>
<dbReference type="PANTHER" id="PTHR42823:SF3">
    <property type="entry name" value="ATP SYNTHASE SUBUNIT A, CHLOROPLASTIC"/>
    <property type="match status" value="1"/>
</dbReference>
<dbReference type="Pfam" id="PF00119">
    <property type="entry name" value="ATP-synt_A"/>
    <property type="match status" value="1"/>
</dbReference>
<dbReference type="PRINTS" id="PR00123">
    <property type="entry name" value="ATPASEA"/>
</dbReference>
<dbReference type="SUPFAM" id="SSF81336">
    <property type="entry name" value="F1F0 ATP synthase subunit A"/>
    <property type="match status" value="1"/>
</dbReference>
<dbReference type="PROSITE" id="PS00449">
    <property type="entry name" value="ATPASE_A"/>
    <property type="match status" value="1"/>
</dbReference>
<geneLocation type="chloroplast"/>
<gene>
    <name evidence="1" type="primary">atpI</name>
</gene>
<comment type="function">
    <text evidence="1">Key component of the proton channel; it plays a direct role in the translocation of protons across the membrane.</text>
</comment>
<comment type="subunit">
    <text evidence="1">F-type ATPases have 2 components, CF(1) - the catalytic core - and CF(0) - the membrane proton channel. CF(1) has five subunits: alpha(3), beta(3), gamma(1), delta(1), epsilon(1). CF(0) has four main subunits: a, b, b' and c.</text>
</comment>
<comment type="subcellular location">
    <subcellularLocation>
        <location evidence="1">Plastid</location>
        <location evidence="1">Chloroplast thylakoid membrane</location>
        <topology evidence="1">Multi-pass membrane protein</topology>
    </subcellularLocation>
</comment>
<comment type="similarity">
    <text evidence="1">Belongs to the ATPase A chain family.</text>
</comment>